<dbReference type="EC" id="1.3.7.7" evidence="1"/>
<dbReference type="EMBL" id="U38804">
    <property type="protein sequence ID" value="AAC08164.1"/>
    <property type="molecule type" value="Genomic_DNA"/>
</dbReference>
<dbReference type="PIR" id="S73199">
    <property type="entry name" value="S73199"/>
</dbReference>
<dbReference type="RefSeq" id="NP_053888.1">
    <property type="nucleotide sequence ID" value="NC_000925.1"/>
</dbReference>
<dbReference type="SMR" id="P51278"/>
<dbReference type="GeneID" id="809908"/>
<dbReference type="UniPathway" id="UPA00670"/>
<dbReference type="GO" id="GO:0009507">
    <property type="term" value="C:chloroplast"/>
    <property type="evidence" value="ECO:0007669"/>
    <property type="project" value="UniProtKB-SubCell"/>
</dbReference>
<dbReference type="GO" id="GO:0051539">
    <property type="term" value="F:4 iron, 4 sulfur cluster binding"/>
    <property type="evidence" value="ECO:0007669"/>
    <property type="project" value="UniProtKB-UniRule"/>
</dbReference>
<dbReference type="GO" id="GO:0005524">
    <property type="term" value="F:ATP binding"/>
    <property type="evidence" value="ECO:0007669"/>
    <property type="project" value="UniProtKB-UniRule"/>
</dbReference>
<dbReference type="GO" id="GO:0046872">
    <property type="term" value="F:metal ion binding"/>
    <property type="evidence" value="ECO:0007669"/>
    <property type="project" value="UniProtKB-KW"/>
</dbReference>
<dbReference type="GO" id="GO:0016730">
    <property type="term" value="F:oxidoreductase activity, acting on iron-sulfur proteins as donors"/>
    <property type="evidence" value="ECO:0007669"/>
    <property type="project" value="InterPro"/>
</dbReference>
<dbReference type="GO" id="GO:0016636">
    <property type="term" value="F:oxidoreductase activity, acting on the CH-CH group of donors, iron-sulfur protein as acceptor"/>
    <property type="evidence" value="ECO:0007669"/>
    <property type="project" value="UniProtKB-UniRule"/>
</dbReference>
<dbReference type="GO" id="GO:0036068">
    <property type="term" value="P:light-independent chlorophyll biosynthetic process"/>
    <property type="evidence" value="ECO:0007669"/>
    <property type="project" value="UniProtKB-UniRule"/>
</dbReference>
<dbReference type="GO" id="GO:0019685">
    <property type="term" value="P:photosynthesis, dark reaction"/>
    <property type="evidence" value="ECO:0007669"/>
    <property type="project" value="InterPro"/>
</dbReference>
<dbReference type="CDD" id="cd01981">
    <property type="entry name" value="Pchlide_reductase_B"/>
    <property type="match status" value="1"/>
</dbReference>
<dbReference type="Gene3D" id="1.20.89.20">
    <property type="match status" value="1"/>
</dbReference>
<dbReference type="Gene3D" id="3.40.50.1980">
    <property type="entry name" value="Nitrogenase molybdenum iron protein domain"/>
    <property type="match status" value="3"/>
</dbReference>
<dbReference type="Gene3D" id="1.10.8.550">
    <property type="entry name" value="Proto-chlorophyllide reductase 57 kD subunit B"/>
    <property type="match status" value="1"/>
</dbReference>
<dbReference type="HAMAP" id="MF_00353">
    <property type="entry name" value="ChlB_BchB"/>
    <property type="match status" value="1"/>
</dbReference>
<dbReference type="InterPro" id="IPR050152">
    <property type="entry name" value="ChlB/BchB/BchZ"/>
</dbReference>
<dbReference type="InterPro" id="IPR013580">
    <property type="entry name" value="LI-POR_suB-like_C"/>
</dbReference>
<dbReference type="InterPro" id="IPR000510">
    <property type="entry name" value="Nase/OxRdtase_comp1"/>
</dbReference>
<dbReference type="InterPro" id="IPR042298">
    <property type="entry name" value="P-CP_red_C"/>
</dbReference>
<dbReference type="InterPro" id="IPR005969">
    <property type="entry name" value="Protochl_reductB"/>
</dbReference>
<dbReference type="InterPro" id="IPR016209">
    <property type="entry name" value="Protochlorophyllide_Rdtase"/>
</dbReference>
<dbReference type="NCBIfam" id="TIGR01278">
    <property type="entry name" value="DPOR_BchB"/>
    <property type="match status" value="1"/>
</dbReference>
<dbReference type="PANTHER" id="PTHR33712">
    <property type="entry name" value="LIGHT-INDEPENDENT PROTOCHLOROPHYLLIDE REDUCTASE SUBUNIT B"/>
    <property type="match status" value="1"/>
</dbReference>
<dbReference type="PANTHER" id="PTHR33712:SF7">
    <property type="entry name" value="LIGHT-INDEPENDENT PROTOCHLOROPHYLLIDE REDUCTASE SUBUNIT B"/>
    <property type="match status" value="1"/>
</dbReference>
<dbReference type="Pfam" id="PF00148">
    <property type="entry name" value="Oxidored_nitro"/>
    <property type="match status" value="1"/>
</dbReference>
<dbReference type="Pfam" id="PF08369">
    <property type="entry name" value="PCP_red"/>
    <property type="match status" value="1"/>
</dbReference>
<dbReference type="PIRSF" id="PIRSF000163">
    <property type="entry name" value="PCP_ChlB"/>
    <property type="match status" value="1"/>
</dbReference>
<dbReference type="SUPFAM" id="SSF53807">
    <property type="entry name" value="Helical backbone' metal receptor"/>
    <property type="match status" value="1"/>
</dbReference>
<feature type="chain" id="PRO_0000219842" description="Light-independent protochlorophyllide reductase subunit B">
    <location>
        <begin position="1"/>
        <end position="507"/>
    </location>
</feature>
<feature type="active site" description="Proton donor" evidence="1">
    <location>
        <position position="293"/>
    </location>
</feature>
<feature type="binding site" evidence="1">
    <location>
        <position position="36"/>
    </location>
    <ligand>
        <name>[4Fe-4S] cluster</name>
        <dbReference type="ChEBI" id="CHEBI:49883"/>
        <note>ligand shared with heterodimeric partner</note>
    </ligand>
</feature>
<feature type="binding site" evidence="1">
    <location>
        <begin position="428"/>
        <end position="429"/>
    </location>
    <ligand>
        <name>substrate</name>
    </ligand>
</feature>
<keyword id="KW-0004">4Fe-4S</keyword>
<keyword id="KW-0067">ATP-binding</keyword>
<keyword id="KW-0149">Chlorophyll biosynthesis</keyword>
<keyword id="KW-0150">Chloroplast</keyword>
<keyword id="KW-0408">Iron</keyword>
<keyword id="KW-0411">Iron-sulfur</keyword>
<keyword id="KW-0479">Metal-binding</keyword>
<keyword id="KW-0547">Nucleotide-binding</keyword>
<keyword id="KW-0560">Oxidoreductase</keyword>
<keyword id="KW-0602">Photosynthesis</keyword>
<keyword id="KW-0934">Plastid</keyword>
<evidence type="ECO:0000255" key="1">
    <source>
        <dbReference type="HAMAP-Rule" id="MF_00353"/>
    </source>
</evidence>
<reference key="1">
    <citation type="journal article" date="1995" name="Plant Mol. Biol. Rep.">
        <title>Complete nucleotide sequence of the Porphyra purpurea chloroplast genome.</title>
        <authorList>
            <person name="Reith M.E."/>
            <person name="Munholland J."/>
        </authorList>
    </citation>
    <scope>NUCLEOTIDE SEQUENCE [LARGE SCALE GENOMIC DNA]</scope>
    <source>
        <strain>Avonport</strain>
    </source>
</reference>
<name>CHLB_PORPU</name>
<proteinExistence type="inferred from homology"/>
<sequence length="507" mass="57288">MKLAYWMYAGPAHIGTLRVASSFKKVHAIMHAPLGDDYFNVMRSMLERDRDFTPVTASVVDRHVLARGSQEKVVENITRKDREEKPDLVILTPTCTSSILQEDLQNFVSRASIETEADVLLADVNHYRVNELQASDRTLEQIVTFYMEKAKSNNILTKKTIKPSVNIIGAVSLGFHNQHDIAELKRLFHDLDIQINQVIPENASVHDLKNLPSAWFNFVPYRETGLMTALYLKKEFNMPYIDITPMGIVQTATSIRSIQKILNALGATVNYEKYIDEQTRFISQSAWFSRSIDCQNLTGKKAIVFGDATHAAAITRILHQEMGIHVAWCGTYCKYDEEWFREQVKGFCDEVIISDDHGLIGDLIAKTEPAAIFGTQMERHIGKRLNIPCGVISSPVHIQNFPLSYRPFLGYEGTNQIADLVYNSFTLGMEDHLLEIFGGHDTTEALSVGISADDSLNWSDEAQKELSKIPGFVRGKVKRNTEKFARDCSKNLITLELMYEAKEKVSS</sequence>
<organism>
    <name type="scientific">Porphyra purpurea</name>
    <name type="common">Red seaweed</name>
    <name type="synonym">Ulva purpurea</name>
    <dbReference type="NCBI Taxonomy" id="2787"/>
    <lineage>
        <taxon>Eukaryota</taxon>
        <taxon>Rhodophyta</taxon>
        <taxon>Bangiophyceae</taxon>
        <taxon>Bangiales</taxon>
        <taxon>Bangiaceae</taxon>
        <taxon>Porphyra</taxon>
    </lineage>
</organism>
<accession>P51278</accession>
<protein>
    <recommendedName>
        <fullName evidence="1">Light-independent protochlorophyllide reductase subunit B</fullName>
        <shortName evidence="1">DPOR subunit B</shortName>
        <shortName evidence="1">LI-POR subunit B</shortName>
        <ecNumber evidence="1">1.3.7.7</ecNumber>
    </recommendedName>
</protein>
<comment type="function">
    <text evidence="1">Component of the dark-operative protochlorophyllide reductase (DPOR) that uses Mg-ATP and reduced ferredoxin to reduce ring D of protochlorophyllide (Pchlide) to form chlorophyllide a (Chlide). This reaction is light-independent. The NB-protein (ChlN-ChlB) is the catalytic component of the complex.</text>
</comment>
<comment type="catalytic activity">
    <reaction evidence="1">
        <text>chlorophyllide a + oxidized 2[4Fe-4S]-[ferredoxin] + 2 ADP + 2 phosphate = protochlorophyllide a + reduced 2[4Fe-4S]-[ferredoxin] + 2 ATP + 2 H2O</text>
        <dbReference type="Rhea" id="RHEA:28202"/>
        <dbReference type="Rhea" id="RHEA-COMP:10002"/>
        <dbReference type="Rhea" id="RHEA-COMP:10004"/>
        <dbReference type="ChEBI" id="CHEBI:15377"/>
        <dbReference type="ChEBI" id="CHEBI:30616"/>
        <dbReference type="ChEBI" id="CHEBI:33722"/>
        <dbReference type="ChEBI" id="CHEBI:33723"/>
        <dbReference type="ChEBI" id="CHEBI:43474"/>
        <dbReference type="ChEBI" id="CHEBI:83348"/>
        <dbReference type="ChEBI" id="CHEBI:83350"/>
        <dbReference type="ChEBI" id="CHEBI:456216"/>
        <dbReference type="EC" id="1.3.7.7"/>
    </reaction>
</comment>
<comment type="cofactor">
    <cofactor evidence="1">
        <name>[4Fe-4S] cluster</name>
        <dbReference type="ChEBI" id="CHEBI:49883"/>
    </cofactor>
    <text evidence="1">Binds 1 [4Fe-4S] cluster per heterodimer. The cluster is bound at the heterodimer interface by residues from both subunits.</text>
</comment>
<comment type="pathway">
    <text evidence="1">Porphyrin-containing compound metabolism; chlorophyll biosynthesis (light-independent).</text>
</comment>
<comment type="subunit">
    <text evidence="1">Protochlorophyllide reductase is composed of three subunits; ChlL, ChlN and ChlB. Forms a heterotetramer of two ChlB and two ChlN subunits.</text>
</comment>
<comment type="subcellular location">
    <subcellularLocation>
        <location>Plastid</location>
        <location>Chloroplast</location>
    </subcellularLocation>
</comment>
<comment type="similarity">
    <text evidence="1">Belongs to the ChlB/BchB/BchZ family.</text>
</comment>
<gene>
    <name evidence="1" type="primary">chlB</name>
</gene>
<geneLocation type="chloroplast"/>